<comment type="catalytic activity">
    <reaction evidence="1">
        <text>D-erythro-1-(imidazol-4-yl)glycerol 3-phosphate = 3-(imidazol-4-yl)-2-oxopropyl phosphate + H2O</text>
        <dbReference type="Rhea" id="RHEA:11040"/>
        <dbReference type="ChEBI" id="CHEBI:15377"/>
        <dbReference type="ChEBI" id="CHEBI:57766"/>
        <dbReference type="ChEBI" id="CHEBI:58278"/>
        <dbReference type="EC" id="4.2.1.19"/>
    </reaction>
</comment>
<comment type="pathway">
    <text evidence="1">Amino-acid biosynthesis; L-histidine biosynthesis; L-histidine from 5-phospho-alpha-D-ribose 1-diphosphate: step 6/9.</text>
</comment>
<comment type="subcellular location">
    <subcellularLocation>
        <location evidence="1">Cytoplasm</location>
    </subcellularLocation>
</comment>
<comment type="similarity">
    <text evidence="1">Belongs to the imidazoleglycerol-phosphate dehydratase family.</text>
</comment>
<name>HIS7_BRASB</name>
<keyword id="KW-0028">Amino-acid biosynthesis</keyword>
<keyword id="KW-0963">Cytoplasm</keyword>
<keyword id="KW-0368">Histidine biosynthesis</keyword>
<keyword id="KW-0456">Lyase</keyword>
<keyword id="KW-1185">Reference proteome</keyword>
<evidence type="ECO:0000255" key="1">
    <source>
        <dbReference type="HAMAP-Rule" id="MF_00076"/>
    </source>
</evidence>
<gene>
    <name evidence="1" type="primary">hisB</name>
    <name type="ordered locus">BBta_0148</name>
</gene>
<accession>A5E8F1</accession>
<feature type="chain" id="PRO_1000010247" description="Imidazoleglycerol-phosphate dehydratase">
    <location>
        <begin position="1"/>
        <end position="197"/>
    </location>
</feature>
<sequence>MRSATIKRKTKETDIEVAVNLDGTGVVNIATGIGFFDHMLDLLARHSRIDMTVKAVGDLHIDFHHTTEDVGIALGQAVRQALGDMAGITRYASIHMPMDETLTRVVIDVSGRPMLVFRTTFPRDKIGEFDTELVREWFNAFAMNAGITLHVETLYGENAHHIAESCFKGLARALRSALAIDPRNQGEVPSTKGQLGG</sequence>
<organism>
    <name type="scientific">Bradyrhizobium sp. (strain BTAi1 / ATCC BAA-1182)</name>
    <dbReference type="NCBI Taxonomy" id="288000"/>
    <lineage>
        <taxon>Bacteria</taxon>
        <taxon>Pseudomonadati</taxon>
        <taxon>Pseudomonadota</taxon>
        <taxon>Alphaproteobacteria</taxon>
        <taxon>Hyphomicrobiales</taxon>
        <taxon>Nitrobacteraceae</taxon>
        <taxon>Bradyrhizobium</taxon>
    </lineage>
</organism>
<proteinExistence type="inferred from homology"/>
<protein>
    <recommendedName>
        <fullName evidence="1">Imidazoleglycerol-phosphate dehydratase</fullName>
        <shortName evidence="1">IGPD</shortName>
        <ecNumber evidence="1">4.2.1.19</ecNumber>
    </recommendedName>
</protein>
<reference key="1">
    <citation type="journal article" date="2007" name="Science">
        <title>Legumes symbioses: absence of nod genes in photosynthetic bradyrhizobia.</title>
        <authorList>
            <person name="Giraud E."/>
            <person name="Moulin L."/>
            <person name="Vallenet D."/>
            <person name="Barbe V."/>
            <person name="Cytryn E."/>
            <person name="Avarre J.-C."/>
            <person name="Jaubert M."/>
            <person name="Simon D."/>
            <person name="Cartieaux F."/>
            <person name="Prin Y."/>
            <person name="Bena G."/>
            <person name="Hannibal L."/>
            <person name="Fardoux J."/>
            <person name="Kojadinovic M."/>
            <person name="Vuillet L."/>
            <person name="Lajus A."/>
            <person name="Cruveiller S."/>
            <person name="Rouy Z."/>
            <person name="Mangenot S."/>
            <person name="Segurens B."/>
            <person name="Dossat C."/>
            <person name="Franck W.L."/>
            <person name="Chang W.-S."/>
            <person name="Saunders E."/>
            <person name="Bruce D."/>
            <person name="Richardson P."/>
            <person name="Normand P."/>
            <person name="Dreyfus B."/>
            <person name="Pignol D."/>
            <person name="Stacey G."/>
            <person name="Emerich D."/>
            <person name="Vermeglio A."/>
            <person name="Medigue C."/>
            <person name="Sadowsky M."/>
        </authorList>
    </citation>
    <scope>NUCLEOTIDE SEQUENCE [LARGE SCALE GENOMIC DNA]</scope>
    <source>
        <strain>BTAi1 / ATCC BAA-1182</strain>
    </source>
</reference>
<dbReference type="EC" id="4.2.1.19" evidence="1"/>
<dbReference type="EMBL" id="CP000494">
    <property type="protein sequence ID" value="ABQ32445.1"/>
    <property type="molecule type" value="Genomic_DNA"/>
</dbReference>
<dbReference type="RefSeq" id="WP_011942667.1">
    <property type="nucleotide sequence ID" value="NC_009485.1"/>
</dbReference>
<dbReference type="SMR" id="A5E8F1"/>
<dbReference type="STRING" id="288000.BBta_0148"/>
<dbReference type="KEGG" id="bbt:BBta_0148"/>
<dbReference type="eggNOG" id="COG0131">
    <property type="taxonomic scope" value="Bacteria"/>
</dbReference>
<dbReference type="HOGENOM" id="CLU_044308_3_0_5"/>
<dbReference type="OrthoDB" id="9813612at2"/>
<dbReference type="UniPathway" id="UPA00031">
    <property type="reaction ID" value="UER00011"/>
</dbReference>
<dbReference type="Proteomes" id="UP000000246">
    <property type="component" value="Chromosome"/>
</dbReference>
<dbReference type="GO" id="GO:0005737">
    <property type="term" value="C:cytoplasm"/>
    <property type="evidence" value="ECO:0007669"/>
    <property type="project" value="UniProtKB-SubCell"/>
</dbReference>
<dbReference type="GO" id="GO:0004424">
    <property type="term" value="F:imidazoleglycerol-phosphate dehydratase activity"/>
    <property type="evidence" value="ECO:0007669"/>
    <property type="project" value="UniProtKB-UniRule"/>
</dbReference>
<dbReference type="GO" id="GO:0000105">
    <property type="term" value="P:L-histidine biosynthetic process"/>
    <property type="evidence" value="ECO:0007669"/>
    <property type="project" value="UniProtKB-UniRule"/>
</dbReference>
<dbReference type="CDD" id="cd07914">
    <property type="entry name" value="IGPD"/>
    <property type="match status" value="1"/>
</dbReference>
<dbReference type="FunFam" id="3.30.230.40:FF:000001">
    <property type="entry name" value="Imidazoleglycerol-phosphate dehydratase HisB"/>
    <property type="match status" value="1"/>
</dbReference>
<dbReference type="FunFam" id="3.30.230.40:FF:000003">
    <property type="entry name" value="Imidazoleglycerol-phosphate dehydratase HisB"/>
    <property type="match status" value="1"/>
</dbReference>
<dbReference type="Gene3D" id="3.30.230.40">
    <property type="entry name" value="Imidazole glycerol phosphate dehydratase, domain 1"/>
    <property type="match status" value="2"/>
</dbReference>
<dbReference type="HAMAP" id="MF_00076">
    <property type="entry name" value="HisB"/>
    <property type="match status" value="1"/>
</dbReference>
<dbReference type="InterPro" id="IPR038494">
    <property type="entry name" value="IGPD_sf"/>
</dbReference>
<dbReference type="InterPro" id="IPR000807">
    <property type="entry name" value="ImidazoleglycerolP_deHydtase"/>
</dbReference>
<dbReference type="InterPro" id="IPR020565">
    <property type="entry name" value="ImidazoleglycerP_deHydtase_CS"/>
</dbReference>
<dbReference type="InterPro" id="IPR020568">
    <property type="entry name" value="Ribosomal_Su5_D2-typ_SF"/>
</dbReference>
<dbReference type="NCBIfam" id="NF002109">
    <property type="entry name" value="PRK00951.1-5"/>
    <property type="match status" value="1"/>
</dbReference>
<dbReference type="NCBIfam" id="NF002111">
    <property type="entry name" value="PRK00951.2-1"/>
    <property type="match status" value="1"/>
</dbReference>
<dbReference type="NCBIfam" id="NF002114">
    <property type="entry name" value="PRK00951.2-4"/>
    <property type="match status" value="1"/>
</dbReference>
<dbReference type="PANTHER" id="PTHR23133:SF2">
    <property type="entry name" value="IMIDAZOLEGLYCEROL-PHOSPHATE DEHYDRATASE"/>
    <property type="match status" value="1"/>
</dbReference>
<dbReference type="PANTHER" id="PTHR23133">
    <property type="entry name" value="IMIDAZOLEGLYCEROL-PHOSPHATE DEHYDRATASE HIS7"/>
    <property type="match status" value="1"/>
</dbReference>
<dbReference type="Pfam" id="PF00475">
    <property type="entry name" value="IGPD"/>
    <property type="match status" value="1"/>
</dbReference>
<dbReference type="SUPFAM" id="SSF54211">
    <property type="entry name" value="Ribosomal protein S5 domain 2-like"/>
    <property type="match status" value="2"/>
</dbReference>
<dbReference type="PROSITE" id="PS00954">
    <property type="entry name" value="IGP_DEHYDRATASE_1"/>
    <property type="match status" value="1"/>
</dbReference>
<dbReference type="PROSITE" id="PS00955">
    <property type="entry name" value="IGP_DEHYDRATASE_2"/>
    <property type="match status" value="1"/>
</dbReference>